<dbReference type="EC" id="3.4.21.4"/>
<dbReference type="EMBL" id="U04853">
    <property type="protein sequence ID" value="AAA84377.1"/>
    <property type="molecule type" value="Genomic_DNA"/>
</dbReference>
<dbReference type="EMBL" id="AE013599">
    <property type="protein sequence ID" value="AAF58655.1"/>
    <property type="molecule type" value="Genomic_DNA"/>
</dbReference>
<dbReference type="EMBL" id="AY113550">
    <property type="protein sequence ID" value="AAM29555.1"/>
    <property type="molecule type" value="mRNA"/>
</dbReference>
<dbReference type="RefSeq" id="NP_523695.1">
    <property type="nucleotide sequence ID" value="NM_078971.4"/>
</dbReference>
<dbReference type="SMR" id="P52905"/>
<dbReference type="BioGRID" id="62014">
    <property type="interactions" value="1"/>
</dbReference>
<dbReference type="FunCoup" id="P52905">
    <property type="interactions" value="66"/>
</dbReference>
<dbReference type="IntAct" id="P52905">
    <property type="interactions" value="3"/>
</dbReference>
<dbReference type="STRING" id="7227.FBpp0087226"/>
<dbReference type="MEROPS" id="S01.115"/>
<dbReference type="PaxDb" id="7227-FBpp0087226"/>
<dbReference type="DNASU" id="36223"/>
<dbReference type="EnsemblMetazoa" id="FBtr0088125">
    <property type="protein sequence ID" value="FBpp0087226"/>
    <property type="gene ID" value="FBgn0015001"/>
</dbReference>
<dbReference type="GeneID" id="36223"/>
<dbReference type="KEGG" id="dme:Dmel_CG7754"/>
<dbReference type="AGR" id="FB:FBgn0015001"/>
<dbReference type="CTD" id="36223"/>
<dbReference type="FlyBase" id="FBgn0015001">
    <property type="gene designation" value="iotaTry"/>
</dbReference>
<dbReference type="VEuPathDB" id="VectorBase:FBgn0015001"/>
<dbReference type="eggNOG" id="KOG3627">
    <property type="taxonomic scope" value="Eukaryota"/>
</dbReference>
<dbReference type="GeneTree" id="ENSGT00940000164166"/>
<dbReference type="HOGENOM" id="CLU_006842_7_0_1"/>
<dbReference type="InParanoid" id="P52905"/>
<dbReference type="OMA" id="GYGWDFV"/>
<dbReference type="OrthoDB" id="10059102at2759"/>
<dbReference type="PhylomeDB" id="P52905"/>
<dbReference type="BioGRID-ORCS" id="36223">
    <property type="hits" value="1 hit in 1 CRISPR screen"/>
</dbReference>
<dbReference type="GenomeRNAi" id="36223"/>
<dbReference type="PRO" id="PR:P52905"/>
<dbReference type="Proteomes" id="UP000000803">
    <property type="component" value="Chromosome 2R"/>
</dbReference>
<dbReference type="Bgee" id="FBgn0015001">
    <property type="expression patterns" value="Expressed in midgut and 16 other cell types or tissues"/>
</dbReference>
<dbReference type="ExpressionAtlas" id="P52905">
    <property type="expression patterns" value="baseline and differential"/>
</dbReference>
<dbReference type="GO" id="GO:0005576">
    <property type="term" value="C:extracellular region"/>
    <property type="evidence" value="ECO:0007669"/>
    <property type="project" value="UniProtKB-SubCell"/>
</dbReference>
<dbReference type="GO" id="GO:0017171">
    <property type="term" value="F:serine hydrolase activity"/>
    <property type="evidence" value="ECO:0007005"/>
    <property type="project" value="FlyBase"/>
</dbReference>
<dbReference type="GO" id="GO:0004252">
    <property type="term" value="F:serine-type endopeptidase activity"/>
    <property type="evidence" value="ECO:0000255"/>
    <property type="project" value="FlyBase"/>
</dbReference>
<dbReference type="GO" id="GO:0006508">
    <property type="term" value="P:proteolysis"/>
    <property type="evidence" value="ECO:0000255"/>
    <property type="project" value="FlyBase"/>
</dbReference>
<dbReference type="CDD" id="cd00190">
    <property type="entry name" value="Tryp_SPc"/>
    <property type="match status" value="1"/>
</dbReference>
<dbReference type="FunFam" id="2.40.10.10:FF:000047">
    <property type="entry name" value="Trypsin eta"/>
    <property type="match status" value="1"/>
</dbReference>
<dbReference type="Gene3D" id="2.40.10.10">
    <property type="entry name" value="Trypsin-like serine proteases"/>
    <property type="match status" value="1"/>
</dbReference>
<dbReference type="InterPro" id="IPR050430">
    <property type="entry name" value="Peptidase_S1"/>
</dbReference>
<dbReference type="InterPro" id="IPR009003">
    <property type="entry name" value="Peptidase_S1_PA"/>
</dbReference>
<dbReference type="InterPro" id="IPR043504">
    <property type="entry name" value="Peptidase_S1_PA_chymotrypsin"/>
</dbReference>
<dbReference type="InterPro" id="IPR001314">
    <property type="entry name" value="Peptidase_S1A"/>
</dbReference>
<dbReference type="InterPro" id="IPR001254">
    <property type="entry name" value="Trypsin_dom"/>
</dbReference>
<dbReference type="InterPro" id="IPR018114">
    <property type="entry name" value="TRYPSIN_HIS"/>
</dbReference>
<dbReference type="InterPro" id="IPR033116">
    <property type="entry name" value="TRYPSIN_SER"/>
</dbReference>
<dbReference type="PANTHER" id="PTHR24276:SF91">
    <property type="entry name" value="AT26814P-RELATED"/>
    <property type="match status" value="1"/>
</dbReference>
<dbReference type="PANTHER" id="PTHR24276">
    <property type="entry name" value="POLYSERASE-RELATED"/>
    <property type="match status" value="1"/>
</dbReference>
<dbReference type="Pfam" id="PF00089">
    <property type="entry name" value="Trypsin"/>
    <property type="match status" value="1"/>
</dbReference>
<dbReference type="PRINTS" id="PR00722">
    <property type="entry name" value="CHYMOTRYPSIN"/>
</dbReference>
<dbReference type="SMART" id="SM00020">
    <property type="entry name" value="Tryp_SPc"/>
    <property type="match status" value="1"/>
</dbReference>
<dbReference type="SUPFAM" id="SSF50494">
    <property type="entry name" value="Trypsin-like serine proteases"/>
    <property type="match status" value="1"/>
</dbReference>
<dbReference type="PROSITE" id="PS50240">
    <property type="entry name" value="TRYPSIN_DOM"/>
    <property type="match status" value="1"/>
</dbReference>
<dbReference type="PROSITE" id="PS00134">
    <property type="entry name" value="TRYPSIN_HIS"/>
    <property type="match status" value="1"/>
</dbReference>
<dbReference type="PROSITE" id="PS00135">
    <property type="entry name" value="TRYPSIN_SER"/>
    <property type="match status" value="1"/>
</dbReference>
<sequence>MAVYGIVATVLVLLLLGDASDVEATGRIIGGSDQLIRNAPWQVSIQISARHECGGVIYSKEIIITAGHCLHERSVTLMKVRVGAQNHNYGGTLVPVAAYKVHEQFDSRFLHYDIAVLRLSTPLTFGLSTRAINLASTSPSGGTTVTVTGWGHTDNGALSDSLQKAQLQIIDRGECASQKFGYGADFVGEETICAASTDADACTGDSGGPLVASSQLVGIVSWGYRCADDNYPGVYADVAILRPWIVKAANAI</sequence>
<proteinExistence type="evidence at transcript level"/>
<reference key="1">
    <citation type="submission" date="1995-11" db="EMBL/GenBank/DDBJ databases">
        <authorList>
            <person name="Gao L."/>
            <person name="Wang S."/>
            <person name="Hickey D.A."/>
        </authorList>
    </citation>
    <scope>NUCLEOTIDE SEQUENCE [GENOMIC DNA]</scope>
    <source>
        <strain>Oregon-R</strain>
    </source>
</reference>
<reference key="2">
    <citation type="journal article" date="2000" name="Science">
        <title>The genome sequence of Drosophila melanogaster.</title>
        <authorList>
            <person name="Adams M.D."/>
            <person name="Celniker S.E."/>
            <person name="Holt R.A."/>
            <person name="Evans C.A."/>
            <person name="Gocayne J.D."/>
            <person name="Amanatides P.G."/>
            <person name="Scherer S.E."/>
            <person name="Li P.W."/>
            <person name="Hoskins R.A."/>
            <person name="Galle R.F."/>
            <person name="George R.A."/>
            <person name="Lewis S.E."/>
            <person name="Richards S."/>
            <person name="Ashburner M."/>
            <person name="Henderson S.N."/>
            <person name="Sutton G.G."/>
            <person name="Wortman J.R."/>
            <person name="Yandell M.D."/>
            <person name="Zhang Q."/>
            <person name="Chen L.X."/>
            <person name="Brandon R.C."/>
            <person name="Rogers Y.-H.C."/>
            <person name="Blazej R.G."/>
            <person name="Champe M."/>
            <person name="Pfeiffer B.D."/>
            <person name="Wan K.H."/>
            <person name="Doyle C."/>
            <person name="Baxter E.G."/>
            <person name="Helt G."/>
            <person name="Nelson C.R."/>
            <person name="Miklos G.L.G."/>
            <person name="Abril J.F."/>
            <person name="Agbayani A."/>
            <person name="An H.-J."/>
            <person name="Andrews-Pfannkoch C."/>
            <person name="Baldwin D."/>
            <person name="Ballew R.M."/>
            <person name="Basu A."/>
            <person name="Baxendale J."/>
            <person name="Bayraktaroglu L."/>
            <person name="Beasley E.M."/>
            <person name="Beeson K.Y."/>
            <person name="Benos P.V."/>
            <person name="Berman B.P."/>
            <person name="Bhandari D."/>
            <person name="Bolshakov S."/>
            <person name="Borkova D."/>
            <person name="Botchan M.R."/>
            <person name="Bouck J."/>
            <person name="Brokstein P."/>
            <person name="Brottier P."/>
            <person name="Burtis K.C."/>
            <person name="Busam D.A."/>
            <person name="Butler H."/>
            <person name="Cadieu E."/>
            <person name="Center A."/>
            <person name="Chandra I."/>
            <person name="Cherry J.M."/>
            <person name="Cawley S."/>
            <person name="Dahlke C."/>
            <person name="Davenport L.B."/>
            <person name="Davies P."/>
            <person name="de Pablos B."/>
            <person name="Delcher A."/>
            <person name="Deng Z."/>
            <person name="Mays A.D."/>
            <person name="Dew I."/>
            <person name="Dietz S.M."/>
            <person name="Dodson K."/>
            <person name="Doup L.E."/>
            <person name="Downes M."/>
            <person name="Dugan-Rocha S."/>
            <person name="Dunkov B.C."/>
            <person name="Dunn P."/>
            <person name="Durbin K.J."/>
            <person name="Evangelista C.C."/>
            <person name="Ferraz C."/>
            <person name="Ferriera S."/>
            <person name="Fleischmann W."/>
            <person name="Fosler C."/>
            <person name="Gabrielian A.E."/>
            <person name="Garg N.S."/>
            <person name="Gelbart W.M."/>
            <person name="Glasser K."/>
            <person name="Glodek A."/>
            <person name="Gong F."/>
            <person name="Gorrell J.H."/>
            <person name="Gu Z."/>
            <person name="Guan P."/>
            <person name="Harris M."/>
            <person name="Harris N.L."/>
            <person name="Harvey D.A."/>
            <person name="Heiman T.J."/>
            <person name="Hernandez J.R."/>
            <person name="Houck J."/>
            <person name="Hostin D."/>
            <person name="Houston K.A."/>
            <person name="Howland T.J."/>
            <person name="Wei M.-H."/>
            <person name="Ibegwam C."/>
            <person name="Jalali M."/>
            <person name="Kalush F."/>
            <person name="Karpen G.H."/>
            <person name="Ke Z."/>
            <person name="Kennison J.A."/>
            <person name="Ketchum K.A."/>
            <person name="Kimmel B.E."/>
            <person name="Kodira C.D."/>
            <person name="Kraft C.L."/>
            <person name="Kravitz S."/>
            <person name="Kulp D."/>
            <person name="Lai Z."/>
            <person name="Lasko P."/>
            <person name="Lei Y."/>
            <person name="Levitsky A.A."/>
            <person name="Li J.H."/>
            <person name="Li Z."/>
            <person name="Liang Y."/>
            <person name="Lin X."/>
            <person name="Liu X."/>
            <person name="Mattei B."/>
            <person name="McIntosh T.C."/>
            <person name="McLeod M.P."/>
            <person name="McPherson D."/>
            <person name="Merkulov G."/>
            <person name="Milshina N.V."/>
            <person name="Mobarry C."/>
            <person name="Morris J."/>
            <person name="Moshrefi A."/>
            <person name="Mount S.M."/>
            <person name="Moy M."/>
            <person name="Murphy B."/>
            <person name="Murphy L."/>
            <person name="Muzny D.M."/>
            <person name="Nelson D.L."/>
            <person name="Nelson D.R."/>
            <person name="Nelson K.A."/>
            <person name="Nixon K."/>
            <person name="Nusskern D.R."/>
            <person name="Pacleb J.M."/>
            <person name="Palazzolo M."/>
            <person name="Pittman G.S."/>
            <person name="Pan S."/>
            <person name="Pollard J."/>
            <person name="Puri V."/>
            <person name="Reese M.G."/>
            <person name="Reinert K."/>
            <person name="Remington K."/>
            <person name="Saunders R.D.C."/>
            <person name="Scheeler F."/>
            <person name="Shen H."/>
            <person name="Shue B.C."/>
            <person name="Siden-Kiamos I."/>
            <person name="Simpson M."/>
            <person name="Skupski M.P."/>
            <person name="Smith T.J."/>
            <person name="Spier E."/>
            <person name="Spradling A.C."/>
            <person name="Stapleton M."/>
            <person name="Strong R."/>
            <person name="Sun E."/>
            <person name="Svirskas R."/>
            <person name="Tector C."/>
            <person name="Turner R."/>
            <person name="Venter E."/>
            <person name="Wang A.H."/>
            <person name="Wang X."/>
            <person name="Wang Z.-Y."/>
            <person name="Wassarman D.A."/>
            <person name="Weinstock G.M."/>
            <person name="Weissenbach J."/>
            <person name="Williams S.M."/>
            <person name="Woodage T."/>
            <person name="Worley K.C."/>
            <person name="Wu D."/>
            <person name="Yang S."/>
            <person name="Yao Q.A."/>
            <person name="Ye J."/>
            <person name="Yeh R.-F."/>
            <person name="Zaveri J.S."/>
            <person name="Zhan M."/>
            <person name="Zhang G."/>
            <person name="Zhao Q."/>
            <person name="Zheng L."/>
            <person name="Zheng X.H."/>
            <person name="Zhong F.N."/>
            <person name="Zhong W."/>
            <person name="Zhou X."/>
            <person name="Zhu S.C."/>
            <person name="Zhu X."/>
            <person name="Smith H.O."/>
            <person name="Gibbs R.A."/>
            <person name="Myers E.W."/>
            <person name="Rubin G.M."/>
            <person name="Venter J.C."/>
        </authorList>
    </citation>
    <scope>NUCLEOTIDE SEQUENCE [LARGE SCALE GENOMIC DNA]</scope>
    <source>
        <strain>Berkeley</strain>
    </source>
</reference>
<reference key="3">
    <citation type="journal article" date="2002" name="Genome Biol.">
        <title>Annotation of the Drosophila melanogaster euchromatic genome: a systematic review.</title>
        <authorList>
            <person name="Misra S."/>
            <person name="Crosby M.A."/>
            <person name="Mungall C.J."/>
            <person name="Matthews B.B."/>
            <person name="Campbell K.S."/>
            <person name="Hradecky P."/>
            <person name="Huang Y."/>
            <person name="Kaminker J.S."/>
            <person name="Millburn G.H."/>
            <person name="Prochnik S.E."/>
            <person name="Smith C.D."/>
            <person name="Tupy J.L."/>
            <person name="Whitfield E.J."/>
            <person name="Bayraktaroglu L."/>
            <person name="Berman B.P."/>
            <person name="Bettencourt B.R."/>
            <person name="Celniker S.E."/>
            <person name="de Grey A.D.N.J."/>
            <person name="Drysdale R.A."/>
            <person name="Harris N.L."/>
            <person name="Richter J."/>
            <person name="Russo S."/>
            <person name="Schroeder A.J."/>
            <person name="Shu S.Q."/>
            <person name="Stapleton M."/>
            <person name="Yamada C."/>
            <person name="Ashburner M."/>
            <person name="Gelbart W.M."/>
            <person name="Rubin G.M."/>
            <person name="Lewis S.E."/>
        </authorList>
    </citation>
    <scope>GENOME REANNOTATION</scope>
    <source>
        <strain>Berkeley</strain>
    </source>
</reference>
<reference key="4">
    <citation type="journal article" date="2002" name="Genome Biol.">
        <title>A Drosophila full-length cDNA resource.</title>
        <authorList>
            <person name="Stapleton M."/>
            <person name="Carlson J.W."/>
            <person name="Brokstein P."/>
            <person name="Yu C."/>
            <person name="Champe M."/>
            <person name="George R.A."/>
            <person name="Guarin H."/>
            <person name="Kronmiller B."/>
            <person name="Pacleb J.M."/>
            <person name="Park S."/>
            <person name="Wan K.H."/>
            <person name="Rubin G.M."/>
            <person name="Celniker S.E."/>
        </authorList>
    </citation>
    <scope>NUCLEOTIDE SEQUENCE [LARGE SCALE MRNA]</scope>
    <source>
        <strain>Berkeley</strain>
        <tissue>Embryo</tissue>
    </source>
</reference>
<comment type="catalytic activity">
    <reaction>
        <text>Preferential cleavage: Arg-|-Xaa, Lys-|-Xaa.</text>
        <dbReference type="EC" id="3.4.21.4"/>
    </reaction>
</comment>
<comment type="subcellular location">
    <subcellularLocation>
        <location>Secreted</location>
        <location>Extracellular space</location>
    </subcellularLocation>
</comment>
<comment type="similarity">
    <text evidence="3">Belongs to the peptidase S1 family.</text>
</comment>
<evidence type="ECO:0000250" key="1"/>
<evidence type="ECO:0000255" key="2"/>
<evidence type="ECO:0000255" key="3">
    <source>
        <dbReference type="PROSITE-ProRule" id="PRU00274"/>
    </source>
</evidence>
<gene>
    <name type="primary">iotaTry</name>
    <name type="synonym">Tryiota</name>
    <name type="ORF">CG7754</name>
</gene>
<feature type="signal peptide" evidence="2">
    <location>
        <begin position="1"/>
        <end position="19"/>
    </location>
</feature>
<feature type="propeptide" id="PRO_0000028275" description="Activation peptide">
    <location>
        <begin position="20"/>
        <end position="27"/>
    </location>
</feature>
<feature type="chain" id="PRO_0000028276" description="Trypsin iota">
    <location>
        <begin position="28"/>
        <end position="252"/>
    </location>
</feature>
<feature type="domain" description="Peptidase S1" evidence="3">
    <location>
        <begin position="28"/>
        <end position="250"/>
    </location>
</feature>
<feature type="active site" description="Charge relay system" evidence="1">
    <location>
        <position position="68"/>
    </location>
</feature>
<feature type="active site" description="Charge relay system" evidence="1">
    <location>
        <position position="113"/>
    </location>
</feature>
<feature type="active site" description="Charge relay system" evidence="1">
    <location>
        <position position="206"/>
    </location>
</feature>
<feature type="site" description="Required for specificity" evidence="1">
    <location>
        <position position="200"/>
    </location>
</feature>
<feature type="disulfide bond" evidence="3">
    <location>
        <begin position="53"/>
        <end position="69"/>
    </location>
</feature>
<feature type="disulfide bond" evidence="3">
    <location>
        <begin position="175"/>
        <end position="193"/>
    </location>
</feature>
<feature type="disulfide bond" evidence="3">
    <location>
        <begin position="202"/>
        <end position="226"/>
    </location>
</feature>
<protein>
    <recommendedName>
        <fullName>Trypsin iota</fullName>
        <ecNumber>3.4.21.4</ecNumber>
    </recommendedName>
</protein>
<accession>P52905</accession>
<accession>Q540Z6</accession>
<accession>Q9V5Y6</accession>
<organism>
    <name type="scientific">Drosophila melanogaster</name>
    <name type="common">Fruit fly</name>
    <dbReference type="NCBI Taxonomy" id="7227"/>
    <lineage>
        <taxon>Eukaryota</taxon>
        <taxon>Metazoa</taxon>
        <taxon>Ecdysozoa</taxon>
        <taxon>Arthropoda</taxon>
        <taxon>Hexapoda</taxon>
        <taxon>Insecta</taxon>
        <taxon>Pterygota</taxon>
        <taxon>Neoptera</taxon>
        <taxon>Endopterygota</taxon>
        <taxon>Diptera</taxon>
        <taxon>Brachycera</taxon>
        <taxon>Muscomorpha</taxon>
        <taxon>Ephydroidea</taxon>
        <taxon>Drosophilidae</taxon>
        <taxon>Drosophila</taxon>
        <taxon>Sophophora</taxon>
    </lineage>
</organism>
<name>TRYI_DROME</name>
<keyword id="KW-1015">Disulfide bond</keyword>
<keyword id="KW-0378">Hydrolase</keyword>
<keyword id="KW-0645">Protease</keyword>
<keyword id="KW-1185">Reference proteome</keyword>
<keyword id="KW-0964">Secreted</keyword>
<keyword id="KW-0720">Serine protease</keyword>
<keyword id="KW-0732">Signal</keyword>
<keyword id="KW-0865">Zymogen</keyword>